<sequence>MGFTDETVRFRLDDSNKVEISETLTAVYRSLEEKGYNPINQIVGYVLSGDPAYVPRYNDARNQIRKYERDEIVEELVRYYLQGNGIDL</sequence>
<name>Y2091_STRA5</name>
<dbReference type="EMBL" id="AE009948">
    <property type="protein sequence ID" value="AAN00950.1"/>
    <property type="molecule type" value="Genomic_DNA"/>
</dbReference>
<dbReference type="RefSeq" id="NP_689077.1">
    <property type="nucleotide sequence ID" value="NC_004116.1"/>
</dbReference>
<dbReference type="RefSeq" id="WP_000507056.1">
    <property type="nucleotide sequence ID" value="NC_004116.1"/>
</dbReference>
<dbReference type="SMR" id="Q8DWX0"/>
<dbReference type="STRING" id="208435.SAG2091"/>
<dbReference type="KEGG" id="sag:SAG2091"/>
<dbReference type="PATRIC" id="fig|208435.3.peg.2093"/>
<dbReference type="HOGENOM" id="CLU_162466_0_0_9"/>
<dbReference type="OrthoDB" id="9796303at2"/>
<dbReference type="Proteomes" id="UP000000821">
    <property type="component" value="Chromosome"/>
</dbReference>
<dbReference type="HAMAP" id="MF_01507">
    <property type="entry name" value="UPF0297"/>
    <property type="match status" value="1"/>
</dbReference>
<dbReference type="InterPro" id="IPR009309">
    <property type="entry name" value="IreB"/>
</dbReference>
<dbReference type="NCBIfam" id="NF003997">
    <property type="entry name" value="PRK05473.1"/>
    <property type="match status" value="1"/>
</dbReference>
<dbReference type="PANTHER" id="PTHR40067">
    <property type="entry name" value="UPF0297 PROTEIN YRZL"/>
    <property type="match status" value="1"/>
</dbReference>
<dbReference type="PANTHER" id="PTHR40067:SF1">
    <property type="entry name" value="UPF0297 PROTEIN YRZL"/>
    <property type="match status" value="1"/>
</dbReference>
<dbReference type="Pfam" id="PF06135">
    <property type="entry name" value="IreB"/>
    <property type="match status" value="1"/>
</dbReference>
<dbReference type="PIRSF" id="PIRSF037258">
    <property type="entry name" value="DUF965_bac"/>
    <property type="match status" value="1"/>
</dbReference>
<accession>Q8DWX0</accession>
<proteinExistence type="inferred from homology"/>
<comment type="similarity">
    <text evidence="1">Belongs to the UPF0297 family.</text>
</comment>
<organism>
    <name type="scientific">Streptococcus agalactiae serotype V (strain ATCC BAA-611 / 2603 V/R)</name>
    <dbReference type="NCBI Taxonomy" id="208435"/>
    <lineage>
        <taxon>Bacteria</taxon>
        <taxon>Bacillati</taxon>
        <taxon>Bacillota</taxon>
        <taxon>Bacilli</taxon>
        <taxon>Lactobacillales</taxon>
        <taxon>Streptococcaceae</taxon>
        <taxon>Streptococcus</taxon>
    </lineage>
</organism>
<keyword id="KW-1185">Reference proteome</keyword>
<gene>
    <name type="ordered locus">SAG2091</name>
</gene>
<protein>
    <recommendedName>
        <fullName evidence="1">UPF0297 protein SAG2091</fullName>
    </recommendedName>
</protein>
<reference key="1">
    <citation type="journal article" date="2002" name="Proc. Natl. Acad. Sci. U.S.A.">
        <title>Complete genome sequence and comparative genomic analysis of an emerging human pathogen, serotype V Streptococcus agalactiae.</title>
        <authorList>
            <person name="Tettelin H."/>
            <person name="Masignani V."/>
            <person name="Cieslewicz M.J."/>
            <person name="Eisen J.A."/>
            <person name="Peterson S.N."/>
            <person name="Wessels M.R."/>
            <person name="Paulsen I.T."/>
            <person name="Nelson K.E."/>
            <person name="Margarit I."/>
            <person name="Read T.D."/>
            <person name="Madoff L.C."/>
            <person name="Wolf A.M."/>
            <person name="Beanan M.J."/>
            <person name="Brinkac L.M."/>
            <person name="Daugherty S.C."/>
            <person name="DeBoy R.T."/>
            <person name="Durkin A.S."/>
            <person name="Kolonay J.F."/>
            <person name="Madupu R."/>
            <person name="Lewis M.R."/>
            <person name="Radune D."/>
            <person name="Fedorova N.B."/>
            <person name="Scanlan D."/>
            <person name="Khouri H.M."/>
            <person name="Mulligan S."/>
            <person name="Carty H.A."/>
            <person name="Cline R.T."/>
            <person name="Van Aken S.E."/>
            <person name="Gill J."/>
            <person name="Scarselli M."/>
            <person name="Mora M."/>
            <person name="Iacobini E.T."/>
            <person name="Brettoni C."/>
            <person name="Galli G."/>
            <person name="Mariani M."/>
            <person name="Vegni F."/>
            <person name="Maione D."/>
            <person name="Rinaudo D."/>
            <person name="Rappuoli R."/>
            <person name="Telford J.L."/>
            <person name="Kasper D.L."/>
            <person name="Grandi G."/>
            <person name="Fraser C.M."/>
        </authorList>
    </citation>
    <scope>NUCLEOTIDE SEQUENCE [LARGE SCALE GENOMIC DNA]</scope>
    <source>
        <strain>ATCC BAA-611 / 2603 V/R</strain>
    </source>
</reference>
<evidence type="ECO:0000255" key="1">
    <source>
        <dbReference type="HAMAP-Rule" id="MF_01507"/>
    </source>
</evidence>
<feature type="chain" id="PRO_0000216988" description="UPF0297 protein SAG2091">
    <location>
        <begin position="1"/>
        <end position="88"/>
    </location>
</feature>